<accession>Q5AI15</accession>
<accession>A0A1D8PD14</accession>
<comment type="function">
    <text evidence="1">Binds the poly(A) tail of mRNA. Appears to be an important mediator of the multiple roles of the poly(A) tail in mRNA biogenesis, stability and translation. In the nucleus, involved in both mRNA cleavage and polyadenylation. Is also required for efficient mRNA export to the cytoplasm. Acts in concert with a poly(A)-specific nuclease (PAN) to affect poly(A) tail shortening, which may occur concomitantly with either nucleocytoplasmic mRNA transport or translational initiation. In the cytoplasm, stimulates translation initiation and regulates mRNA decay through translation termination-coupled poly(A) shortening, probably mediated by PAN (By similarity).</text>
</comment>
<comment type="subcellular location">
    <subcellularLocation>
        <location evidence="1">Cytoplasm</location>
    </subcellularLocation>
    <subcellularLocation>
        <location evidence="1">Nucleus</location>
    </subcellularLocation>
</comment>
<comment type="similarity">
    <text evidence="5">Belongs to the polyadenylate-binding protein type-1 family.</text>
</comment>
<gene>
    <name type="primary">PAB1</name>
    <name type="ordered locus">CAALFM_C103370WA</name>
    <name type="ORF">CaO19.10555</name>
    <name type="ORF">CaO19.3037</name>
</gene>
<dbReference type="EMBL" id="CP017623">
    <property type="protein sequence ID" value="AOW26018.1"/>
    <property type="molecule type" value="Genomic_DNA"/>
</dbReference>
<dbReference type="RefSeq" id="XP_721535.1">
    <property type="nucleotide sequence ID" value="XM_716442.2"/>
</dbReference>
<dbReference type="SMR" id="Q5AI15"/>
<dbReference type="BioGRID" id="1219985">
    <property type="interactions" value="2"/>
</dbReference>
<dbReference type="FunCoup" id="Q5AI15">
    <property type="interactions" value="1440"/>
</dbReference>
<dbReference type="STRING" id="237561.Q5AI15"/>
<dbReference type="EnsemblFungi" id="C1_03370W_A-T">
    <property type="protein sequence ID" value="C1_03370W_A-T-p1"/>
    <property type="gene ID" value="C1_03370W_A"/>
</dbReference>
<dbReference type="GeneID" id="3636891"/>
<dbReference type="KEGG" id="cal:CAALFM_C103370WA"/>
<dbReference type="CGD" id="CAL0000195952">
    <property type="gene designation" value="orf19.10555"/>
</dbReference>
<dbReference type="VEuPathDB" id="FungiDB:C1_03370W_A"/>
<dbReference type="eggNOG" id="KOG0123">
    <property type="taxonomic scope" value="Eukaryota"/>
</dbReference>
<dbReference type="HOGENOM" id="CLU_012062_22_4_1"/>
<dbReference type="InParanoid" id="Q5AI15"/>
<dbReference type="OrthoDB" id="19742at2759"/>
<dbReference type="PRO" id="PR:Q5AI15"/>
<dbReference type="Proteomes" id="UP000000559">
    <property type="component" value="Chromosome 1"/>
</dbReference>
<dbReference type="GO" id="GO:0010494">
    <property type="term" value="C:cytoplasmic stress granule"/>
    <property type="evidence" value="ECO:0000318"/>
    <property type="project" value="GO_Central"/>
</dbReference>
<dbReference type="GO" id="GO:0005829">
    <property type="term" value="C:cytosol"/>
    <property type="evidence" value="ECO:0000318"/>
    <property type="project" value="GO_Central"/>
</dbReference>
<dbReference type="GO" id="GO:0005634">
    <property type="term" value="C:nucleus"/>
    <property type="evidence" value="ECO:0000318"/>
    <property type="project" value="GO_Central"/>
</dbReference>
<dbReference type="GO" id="GO:0071014">
    <property type="term" value="C:post-mRNA release spliceosomal complex"/>
    <property type="evidence" value="ECO:0007669"/>
    <property type="project" value="EnsemblFungi"/>
</dbReference>
<dbReference type="GO" id="GO:1990904">
    <property type="term" value="C:ribonucleoprotein complex"/>
    <property type="evidence" value="ECO:0000318"/>
    <property type="project" value="GO_Central"/>
</dbReference>
<dbReference type="GO" id="GO:0005840">
    <property type="term" value="C:ribosome"/>
    <property type="evidence" value="ECO:0007669"/>
    <property type="project" value="EnsemblFungi"/>
</dbReference>
<dbReference type="GO" id="GO:0140693">
    <property type="term" value="F:molecular condensate scaffold activity"/>
    <property type="evidence" value="ECO:0007669"/>
    <property type="project" value="EnsemblFungi"/>
</dbReference>
<dbReference type="GO" id="GO:0003730">
    <property type="term" value="F:mRNA 3'-UTR binding"/>
    <property type="evidence" value="ECO:0000318"/>
    <property type="project" value="GO_Central"/>
</dbReference>
<dbReference type="GO" id="GO:0008143">
    <property type="term" value="F:poly(A) binding"/>
    <property type="evidence" value="ECO:0000318"/>
    <property type="project" value="GO_Central"/>
</dbReference>
<dbReference type="GO" id="GO:0008266">
    <property type="term" value="F:poly(U) RNA binding"/>
    <property type="evidence" value="ECO:0000318"/>
    <property type="project" value="GO_Central"/>
</dbReference>
<dbReference type="GO" id="GO:1990841">
    <property type="term" value="F:promoter-specific chromatin binding"/>
    <property type="evidence" value="ECO:0007669"/>
    <property type="project" value="EnsemblFungi"/>
</dbReference>
<dbReference type="GO" id="GO:0008428">
    <property type="term" value="F:ribonuclease inhibitor activity"/>
    <property type="evidence" value="ECO:0007669"/>
    <property type="project" value="EnsemblFungi"/>
</dbReference>
<dbReference type="GO" id="GO:0031124">
    <property type="term" value="P:mRNA 3'-end processing"/>
    <property type="evidence" value="ECO:0007669"/>
    <property type="project" value="EnsemblFungi"/>
</dbReference>
<dbReference type="GO" id="GO:0051028">
    <property type="term" value="P:mRNA transport"/>
    <property type="evidence" value="ECO:0007669"/>
    <property type="project" value="UniProtKB-KW"/>
</dbReference>
<dbReference type="GO" id="GO:0000289">
    <property type="term" value="P:nuclear-transcribed mRNA poly(A) tail shortening"/>
    <property type="evidence" value="ECO:0007669"/>
    <property type="project" value="EnsemblFungi"/>
</dbReference>
<dbReference type="GO" id="GO:0060211">
    <property type="term" value="P:regulation of nuclear-transcribed mRNA poly(A) tail shortening"/>
    <property type="evidence" value="ECO:0007669"/>
    <property type="project" value="EnsemblFungi"/>
</dbReference>
<dbReference type="GO" id="GO:0006446">
    <property type="term" value="P:regulation of translational initiation"/>
    <property type="evidence" value="ECO:0007669"/>
    <property type="project" value="EnsemblFungi"/>
</dbReference>
<dbReference type="CDD" id="cd12378">
    <property type="entry name" value="RRM1_I_PABPs"/>
    <property type="match status" value="1"/>
</dbReference>
<dbReference type="CDD" id="cd12379">
    <property type="entry name" value="RRM2_I_PABPs"/>
    <property type="match status" value="1"/>
</dbReference>
<dbReference type="CDD" id="cd12380">
    <property type="entry name" value="RRM3_I_PABPs"/>
    <property type="match status" value="1"/>
</dbReference>
<dbReference type="CDD" id="cd12381">
    <property type="entry name" value="RRM4_I_PABPs"/>
    <property type="match status" value="1"/>
</dbReference>
<dbReference type="FunFam" id="1.10.1900.10:FF:000008">
    <property type="entry name" value="Polyadenylate-binding protein"/>
    <property type="match status" value="1"/>
</dbReference>
<dbReference type="FunFam" id="3.30.70.330:FF:000003">
    <property type="entry name" value="Polyadenylate-binding protein"/>
    <property type="match status" value="1"/>
</dbReference>
<dbReference type="FunFam" id="3.30.70.330:FF:000211">
    <property type="entry name" value="Polyadenylate-binding protein"/>
    <property type="match status" value="1"/>
</dbReference>
<dbReference type="FunFam" id="3.30.70.330:FF:000384">
    <property type="entry name" value="Polyadenylate-binding protein"/>
    <property type="match status" value="1"/>
</dbReference>
<dbReference type="FunFam" id="3.30.70.330:FF:000385">
    <property type="entry name" value="Polyadenylate-binding protein"/>
    <property type="match status" value="1"/>
</dbReference>
<dbReference type="Gene3D" id="3.30.70.330">
    <property type="match status" value="4"/>
</dbReference>
<dbReference type="Gene3D" id="1.10.1900.10">
    <property type="entry name" value="c-terminal domain of poly(a) binding protein"/>
    <property type="match status" value="1"/>
</dbReference>
<dbReference type="InterPro" id="IPR012677">
    <property type="entry name" value="Nucleotide-bd_a/b_plait_sf"/>
</dbReference>
<dbReference type="InterPro" id="IPR036053">
    <property type="entry name" value="PABP-dom"/>
</dbReference>
<dbReference type="InterPro" id="IPR006515">
    <property type="entry name" value="PABP_1234"/>
</dbReference>
<dbReference type="InterPro" id="IPR002004">
    <property type="entry name" value="PABP_HYD_C"/>
</dbReference>
<dbReference type="InterPro" id="IPR034364">
    <property type="entry name" value="PABP_RRM1"/>
</dbReference>
<dbReference type="InterPro" id="IPR035979">
    <property type="entry name" value="RBD_domain_sf"/>
</dbReference>
<dbReference type="InterPro" id="IPR045305">
    <property type="entry name" value="RRM2_I_PABPs"/>
</dbReference>
<dbReference type="InterPro" id="IPR000504">
    <property type="entry name" value="RRM_dom"/>
</dbReference>
<dbReference type="InterPro" id="IPR003954">
    <property type="entry name" value="RRM_dom_euk"/>
</dbReference>
<dbReference type="NCBIfam" id="TIGR01628">
    <property type="entry name" value="PABP-1234"/>
    <property type="match status" value="1"/>
</dbReference>
<dbReference type="PANTHER" id="PTHR24012">
    <property type="entry name" value="RNA BINDING PROTEIN"/>
    <property type="match status" value="1"/>
</dbReference>
<dbReference type="Pfam" id="PF00658">
    <property type="entry name" value="MLLE"/>
    <property type="match status" value="1"/>
</dbReference>
<dbReference type="Pfam" id="PF00076">
    <property type="entry name" value="RRM_1"/>
    <property type="match status" value="4"/>
</dbReference>
<dbReference type="SMART" id="SM00517">
    <property type="entry name" value="PolyA"/>
    <property type="match status" value="1"/>
</dbReference>
<dbReference type="SMART" id="SM00360">
    <property type="entry name" value="RRM"/>
    <property type="match status" value="4"/>
</dbReference>
<dbReference type="SMART" id="SM00361">
    <property type="entry name" value="RRM_1"/>
    <property type="match status" value="4"/>
</dbReference>
<dbReference type="SUPFAM" id="SSF63570">
    <property type="entry name" value="PABC (PABP) domain"/>
    <property type="match status" value="1"/>
</dbReference>
<dbReference type="SUPFAM" id="SSF54928">
    <property type="entry name" value="RNA-binding domain, RBD"/>
    <property type="match status" value="2"/>
</dbReference>
<dbReference type="PROSITE" id="PS51309">
    <property type="entry name" value="PABC"/>
    <property type="match status" value="1"/>
</dbReference>
<dbReference type="PROSITE" id="PS50102">
    <property type="entry name" value="RRM"/>
    <property type="match status" value="4"/>
</dbReference>
<feature type="chain" id="PRO_0000295384" description="Polyadenylate-binding protein, cytoplasmic and nuclear">
    <location>
        <begin position="1"/>
        <end position="629"/>
    </location>
</feature>
<feature type="domain" description="RRM 1" evidence="2">
    <location>
        <begin position="52"/>
        <end position="130"/>
    </location>
</feature>
<feature type="domain" description="RRM 2" evidence="2">
    <location>
        <begin position="140"/>
        <end position="217"/>
    </location>
</feature>
<feature type="domain" description="RRM 3" evidence="2">
    <location>
        <begin position="233"/>
        <end position="310"/>
    </location>
</feature>
<feature type="domain" description="RRM 4" evidence="2">
    <location>
        <begin position="336"/>
        <end position="413"/>
    </location>
</feature>
<feature type="domain" description="PABC" evidence="3">
    <location>
        <begin position="537"/>
        <end position="618"/>
    </location>
</feature>
<feature type="region of interest" description="Disordered" evidence="4">
    <location>
        <begin position="1"/>
        <end position="48"/>
    </location>
</feature>
<feature type="region of interest" description="Disordered" evidence="4">
    <location>
        <begin position="503"/>
        <end position="534"/>
    </location>
</feature>
<feature type="compositionally biased region" description="Polar residues" evidence="4">
    <location>
        <begin position="1"/>
        <end position="11"/>
    </location>
</feature>
<feature type="compositionally biased region" description="Low complexity" evidence="4">
    <location>
        <begin position="20"/>
        <end position="36"/>
    </location>
</feature>
<feature type="compositionally biased region" description="Polar residues" evidence="4">
    <location>
        <begin position="505"/>
        <end position="517"/>
    </location>
</feature>
<keyword id="KW-0963">Cytoplasm</keyword>
<keyword id="KW-0507">mRNA processing</keyword>
<keyword id="KW-0509">mRNA transport</keyword>
<keyword id="KW-0539">Nucleus</keyword>
<keyword id="KW-1185">Reference proteome</keyword>
<keyword id="KW-0677">Repeat</keyword>
<keyword id="KW-0694">RNA-binding</keyword>
<keyword id="KW-0810">Translation regulation</keyword>
<keyword id="KW-0813">Transport</keyword>
<organism>
    <name type="scientific">Candida albicans (strain SC5314 / ATCC MYA-2876)</name>
    <name type="common">Yeast</name>
    <dbReference type="NCBI Taxonomy" id="237561"/>
    <lineage>
        <taxon>Eukaryota</taxon>
        <taxon>Fungi</taxon>
        <taxon>Dikarya</taxon>
        <taxon>Ascomycota</taxon>
        <taxon>Saccharomycotina</taxon>
        <taxon>Pichiomycetes</taxon>
        <taxon>Debaryomycetaceae</taxon>
        <taxon>Candida/Lodderomyces clade</taxon>
        <taxon>Candida</taxon>
    </lineage>
</organism>
<reference key="1">
    <citation type="journal article" date="2004" name="Proc. Natl. Acad. Sci. U.S.A.">
        <title>The diploid genome sequence of Candida albicans.</title>
        <authorList>
            <person name="Jones T."/>
            <person name="Federspiel N.A."/>
            <person name="Chibana H."/>
            <person name="Dungan J."/>
            <person name="Kalman S."/>
            <person name="Magee B.B."/>
            <person name="Newport G."/>
            <person name="Thorstenson Y.R."/>
            <person name="Agabian N."/>
            <person name="Magee P.T."/>
            <person name="Davis R.W."/>
            <person name="Scherer S."/>
        </authorList>
    </citation>
    <scope>NUCLEOTIDE SEQUENCE [LARGE SCALE GENOMIC DNA]</scope>
    <source>
        <strain>SC5314 / ATCC MYA-2876</strain>
    </source>
</reference>
<reference key="2">
    <citation type="journal article" date="2007" name="Genome Biol.">
        <title>Assembly of the Candida albicans genome into sixteen supercontigs aligned on the eight chromosomes.</title>
        <authorList>
            <person name="van het Hoog M."/>
            <person name="Rast T.J."/>
            <person name="Martchenko M."/>
            <person name="Grindle S."/>
            <person name="Dignard D."/>
            <person name="Hogues H."/>
            <person name="Cuomo C."/>
            <person name="Berriman M."/>
            <person name="Scherer S."/>
            <person name="Magee B.B."/>
            <person name="Whiteway M."/>
            <person name="Chibana H."/>
            <person name="Nantel A."/>
            <person name="Magee P.T."/>
        </authorList>
    </citation>
    <scope>GENOME REANNOTATION</scope>
    <source>
        <strain>SC5314 / ATCC MYA-2876</strain>
    </source>
</reference>
<reference key="3">
    <citation type="journal article" date="2013" name="Genome Biol.">
        <title>Assembly of a phased diploid Candida albicans genome facilitates allele-specific measurements and provides a simple model for repeat and indel structure.</title>
        <authorList>
            <person name="Muzzey D."/>
            <person name="Schwartz K."/>
            <person name="Weissman J.S."/>
            <person name="Sherlock G."/>
        </authorList>
    </citation>
    <scope>NUCLEOTIDE SEQUENCE [LARGE SCALE GENOMIC DNA]</scope>
    <scope>GENOME REANNOTATION</scope>
    <source>
        <strain>SC5314 / ATCC MYA-2876</strain>
    </source>
</reference>
<evidence type="ECO:0000250" key="1"/>
<evidence type="ECO:0000255" key="2">
    <source>
        <dbReference type="PROSITE-ProRule" id="PRU00176"/>
    </source>
</evidence>
<evidence type="ECO:0000255" key="3">
    <source>
        <dbReference type="PROSITE-ProRule" id="PRU00641"/>
    </source>
</evidence>
<evidence type="ECO:0000256" key="4">
    <source>
        <dbReference type="SAM" id="MobiDB-lite"/>
    </source>
</evidence>
<evidence type="ECO:0000305" key="5"/>
<protein>
    <recommendedName>
        <fullName>Polyadenylate-binding protein, cytoplasmic and nuclear</fullName>
        <shortName>PABP</shortName>
        <shortName>Poly(A)-binding protein</shortName>
    </recommendedName>
    <alternativeName>
        <fullName>Polyadenylate tail-binding protein</fullName>
    </alternativeName>
</protein>
<proteinExistence type="inferred from homology"/>
<sequence>MSAAETNQLQESMEKLNIGSTTEEQSAAAATTTADQSAEEQGESSGVAENSASLYVGELNPSVNEATLFEIFSPIGQVSSIRVCRDAVSKKSLGYAYVNYHKYEDGEKAIEELNYNPIEGRPCRIMWSQRDPSARRSGDGNIFIKNLHPAIDNKALHDTFSAFGKILSCKVATDEFGQSKCFGFVHYETAEAAEAAIENVNGMLLNDREVFVGKHISKKDRESKFEEMKANFTNIYVKNIDLNYSEESFEKLFSPFGKITSIYLEKDQDGKSKGFGFVNFEDHESAVKAVEELNDKEINGQKIYVGRAQKKRERLEELKKQYEAVRLEKLAKYQGVNLFVKNLDDTIDSEKLEEEFKPFGTITSAKVMVDEAGKSKGFGFVCFTTPEEATKAITEMNTRMINGKPLYVALAQRKDVRRSQLEQQIQARNQMRMQNAAAGGLPGQFIPPMFYGQQGFFPPNGRGNAPYPGPNPQMMMRGRGQPFPEQWPRPGPNGQPVPVYGIPPQFQQDFNGQNMRPQQQQQQQPRGGYYPNRNQTSKRDLAAIISSVPQDQQKRILGEELYPKIVATGKAQEPEAAGKITGMMLGLENQEILDLLDDDELFNNHFEDALTAFEEYKKSEAAGNAEEQA</sequence>
<name>PABP_CANAL</name>